<keyword id="KW-1185">Reference proteome</keyword>
<keyword id="KW-0687">Ribonucleoprotein</keyword>
<keyword id="KW-0689">Ribosomal protein</keyword>
<name>RL32_XYLFT</name>
<organism>
    <name type="scientific">Xylella fastidiosa (strain Temecula1 / ATCC 700964)</name>
    <dbReference type="NCBI Taxonomy" id="183190"/>
    <lineage>
        <taxon>Bacteria</taxon>
        <taxon>Pseudomonadati</taxon>
        <taxon>Pseudomonadota</taxon>
        <taxon>Gammaproteobacteria</taxon>
        <taxon>Lysobacterales</taxon>
        <taxon>Lysobacteraceae</taxon>
        <taxon>Xylella</taxon>
    </lineage>
</organism>
<proteinExistence type="inferred from homology"/>
<accession>Q87CL6</accession>
<reference key="1">
    <citation type="journal article" date="2003" name="J. Bacteriol.">
        <title>Comparative analyses of the complete genome sequences of Pierce's disease and citrus variegated chlorosis strains of Xylella fastidiosa.</title>
        <authorList>
            <person name="Van Sluys M.A."/>
            <person name="de Oliveira M.C."/>
            <person name="Monteiro-Vitorello C.B."/>
            <person name="Miyaki C.Y."/>
            <person name="Furlan L.R."/>
            <person name="Camargo L.E.A."/>
            <person name="da Silva A.C.R."/>
            <person name="Moon D.H."/>
            <person name="Takita M.A."/>
            <person name="Lemos E.G.M."/>
            <person name="Machado M.A."/>
            <person name="Ferro M.I.T."/>
            <person name="da Silva F.R."/>
            <person name="Goldman M.H.S."/>
            <person name="Goldman G.H."/>
            <person name="Lemos M.V.F."/>
            <person name="El-Dorry H."/>
            <person name="Tsai S.M."/>
            <person name="Carrer H."/>
            <person name="Carraro D.M."/>
            <person name="de Oliveira R.C."/>
            <person name="Nunes L.R."/>
            <person name="Siqueira W.J."/>
            <person name="Coutinho L.L."/>
            <person name="Kimura E.T."/>
            <person name="Ferro E.S."/>
            <person name="Harakava R."/>
            <person name="Kuramae E.E."/>
            <person name="Marino C.L."/>
            <person name="Giglioti E."/>
            <person name="Abreu I.L."/>
            <person name="Alves L.M.C."/>
            <person name="do Amaral A.M."/>
            <person name="Baia G.S."/>
            <person name="Blanco S.R."/>
            <person name="Brito M.S."/>
            <person name="Cannavan F.S."/>
            <person name="Celestino A.V."/>
            <person name="da Cunha A.F."/>
            <person name="Fenille R.C."/>
            <person name="Ferro J.A."/>
            <person name="Formighieri E.F."/>
            <person name="Kishi L.T."/>
            <person name="Leoni S.G."/>
            <person name="Oliveira A.R."/>
            <person name="Rosa V.E. Jr."/>
            <person name="Sassaki F.T."/>
            <person name="Sena J.A.D."/>
            <person name="de Souza A.A."/>
            <person name="Truffi D."/>
            <person name="Tsukumo F."/>
            <person name="Yanai G.M."/>
            <person name="Zaros L.G."/>
            <person name="Civerolo E.L."/>
            <person name="Simpson A.J.G."/>
            <person name="Almeida N.F. Jr."/>
            <person name="Setubal J.C."/>
            <person name="Kitajima J.P."/>
        </authorList>
    </citation>
    <scope>NUCLEOTIDE SEQUENCE [LARGE SCALE GENOMIC DNA]</scope>
    <source>
        <strain>Temecula1 / ATCC 700964</strain>
    </source>
</reference>
<sequence length="64" mass="7109">MAVQKSRVTPSRRGQRRSHDALAAKKLSIDPTSGEVHIRHHVTADGYYRGKKVIAIKASVVEED</sequence>
<protein>
    <recommendedName>
        <fullName evidence="2">Large ribosomal subunit protein bL32</fullName>
    </recommendedName>
    <alternativeName>
        <fullName evidence="4">50S ribosomal protein L32</fullName>
    </alternativeName>
</protein>
<dbReference type="EMBL" id="AE009442">
    <property type="protein sequence ID" value="AAO28909.1"/>
    <property type="molecule type" value="Genomic_DNA"/>
</dbReference>
<dbReference type="RefSeq" id="WP_004084879.1">
    <property type="nucleotide sequence ID" value="NC_004556.1"/>
</dbReference>
<dbReference type="SMR" id="Q87CL6"/>
<dbReference type="KEGG" id="xft:PD_1049"/>
<dbReference type="HOGENOM" id="CLU_129084_2_1_6"/>
<dbReference type="Proteomes" id="UP000002516">
    <property type="component" value="Chromosome"/>
</dbReference>
<dbReference type="GO" id="GO:0015934">
    <property type="term" value="C:large ribosomal subunit"/>
    <property type="evidence" value="ECO:0007669"/>
    <property type="project" value="InterPro"/>
</dbReference>
<dbReference type="GO" id="GO:0003735">
    <property type="term" value="F:structural constituent of ribosome"/>
    <property type="evidence" value="ECO:0007669"/>
    <property type="project" value="InterPro"/>
</dbReference>
<dbReference type="GO" id="GO:0006412">
    <property type="term" value="P:translation"/>
    <property type="evidence" value="ECO:0007669"/>
    <property type="project" value="UniProtKB-UniRule"/>
</dbReference>
<dbReference type="HAMAP" id="MF_00340">
    <property type="entry name" value="Ribosomal_bL32"/>
    <property type="match status" value="1"/>
</dbReference>
<dbReference type="InterPro" id="IPR002677">
    <property type="entry name" value="Ribosomal_bL32"/>
</dbReference>
<dbReference type="InterPro" id="IPR044957">
    <property type="entry name" value="Ribosomal_bL32_bact"/>
</dbReference>
<dbReference type="InterPro" id="IPR011332">
    <property type="entry name" value="Ribosomal_zn-bd"/>
</dbReference>
<dbReference type="NCBIfam" id="TIGR01031">
    <property type="entry name" value="rpmF_bact"/>
    <property type="match status" value="1"/>
</dbReference>
<dbReference type="PANTHER" id="PTHR35534">
    <property type="entry name" value="50S RIBOSOMAL PROTEIN L32"/>
    <property type="match status" value="1"/>
</dbReference>
<dbReference type="PANTHER" id="PTHR35534:SF1">
    <property type="entry name" value="LARGE RIBOSOMAL SUBUNIT PROTEIN BL32"/>
    <property type="match status" value="1"/>
</dbReference>
<dbReference type="Pfam" id="PF01783">
    <property type="entry name" value="Ribosomal_L32p"/>
    <property type="match status" value="1"/>
</dbReference>
<dbReference type="SUPFAM" id="SSF57829">
    <property type="entry name" value="Zn-binding ribosomal proteins"/>
    <property type="match status" value="1"/>
</dbReference>
<comment type="similarity">
    <text evidence="2">Belongs to the bacterial ribosomal protein bL32 family.</text>
</comment>
<gene>
    <name evidence="2" type="primary">rpmF</name>
    <name type="ordered locus">PD_1049</name>
</gene>
<evidence type="ECO:0000250" key="1"/>
<evidence type="ECO:0000255" key="2">
    <source>
        <dbReference type="HAMAP-Rule" id="MF_00340"/>
    </source>
</evidence>
<evidence type="ECO:0000256" key="3">
    <source>
        <dbReference type="SAM" id="MobiDB-lite"/>
    </source>
</evidence>
<evidence type="ECO:0000305" key="4"/>
<feature type="initiator methionine" description="Removed" evidence="1">
    <location>
        <position position="1"/>
    </location>
</feature>
<feature type="chain" id="PRO_0000172443" description="Large ribosomal subunit protein bL32">
    <location>
        <begin position="2"/>
        <end position="64"/>
    </location>
</feature>
<feature type="region of interest" description="Disordered" evidence="3">
    <location>
        <begin position="1"/>
        <end position="23"/>
    </location>
</feature>